<comment type="function">
    <text evidence="1">Produces ATP from ADP in the presence of a proton gradient across the membrane. The catalytic sites are hosted primarily by the beta subunits.</text>
</comment>
<comment type="catalytic activity">
    <reaction evidence="1">
        <text>ATP + H2O + 4 H(+)(in) = ADP + phosphate + 5 H(+)(out)</text>
        <dbReference type="Rhea" id="RHEA:57720"/>
        <dbReference type="ChEBI" id="CHEBI:15377"/>
        <dbReference type="ChEBI" id="CHEBI:15378"/>
        <dbReference type="ChEBI" id="CHEBI:30616"/>
        <dbReference type="ChEBI" id="CHEBI:43474"/>
        <dbReference type="ChEBI" id="CHEBI:456216"/>
        <dbReference type="EC" id="7.1.2.2"/>
    </reaction>
</comment>
<comment type="subunit">
    <text evidence="1">F-type ATPases have 2 components, CF(1) - the catalytic core - and CF(0) - the membrane proton channel. CF(1) has five subunits: alpha(3), beta(3), gamma(1), delta(1), epsilon(1). CF(0) has three main subunits: a(1), b(2) and c(9-12). The alpha and beta chains form an alternating ring which encloses part of the gamma chain. CF(1) is attached to CF(0) by a central stalk formed by the gamma and epsilon chains, while a peripheral stalk is formed by the delta and b chains.</text>
</comment>
<comment type="subcellular location">
    <subcellularLocation>
        <location evidence="1">Cell inner membrane</location>
        <topology evidence="1">Peripheral membrane protein</topology>
    </subcellularLocation>
</comment>
<comment type="similarity">
    <text evidence="1">Belongs to the ATPase alpha/beta chains family.</text>
</comment>
<evidence type="ECO:0000255" key="1">
    <source>
        <dbReference type="HAMAP-Rule" id="MF_01347"/>
    </source>
</evidence>
<feature type="chain" id="PRO_1000143564" description="ATP synthase subunit beta">
    <location>
        <begin position="1"/>
        <end position="466"/>
    </location>
</feature>
<feature type="binding site" evidence="1">
    <location>
        <begin position="148"/>
        <end position="155"/>
    </location>
    <ligand>
        <name>ATP</name>
        <dbReference type="ChEBI" id="CHEBI:30616"/>
    </ligand>
</feature>
<organism>
    <name type="scientific">Xylella fastidiosa (strain M23)</name>
    <dbReference type="NCBI Taxonomy" id="405441"/>
    <lineage>
        <taxon>Bacteria</taxon>
        <taxon>Pseudomonadati</taxon>
        <taxon>Pseudomonadota</taxon>
        <taxon>Gammaproteobacteria</taxon>
        <taxon>Lysobacterales</taxon>
        <taxon>Lysobacteraceae</taxon>
        <taxon>Xylella</taxon>
    </lineage>
</organism>
<dbReference type="EC" id="7.1.2.2" evidence="1"/>
<dbReference type="EMBL" id="CP001011">
    <property type="protein sequence ID" value="ACB91871.1"/>
    <property type="molecule type" value="Genomic_DNA"/>
</dbReference>
<dbReference type="RefSeq" id="WP_004090068.1">
    <property type="nucleotide sequence ID" value="NC_010577.1"/>
</dbReference>
<dbReference type="SMR" id="B2I877"/>
<dbReference type="GeneID" id="93904130"/>
<dbReference type="KEGG" id="xfn:XfasM23_0424"/>
<dbReference type="HOGENOM" id="CLU_022398_0_2_6"/>
<dbReference type="Proteomes" id="UP000001698">
    <property type="component" value="Chromosome"/>
</dbReference>
<dbReference type="GO" id="GO:0005886">
    <property type="term" value="C:plasma membrane"/>
    <property type="evidence" value="ECO:0007669"/>
    <property type="project" value="UniProtKB-SubCell"/>
</dbReference>
<dbReference type="GO" id="GO:0045259">
    <property type="term" value="C:proton-transporting ATP synthase complex"/>
    <property type="evidence" value="ECO:0007669"/>
    <property type="project" value="UniProtKB-KW"/>
</dbReference>
<dbReference type="GO" id="GO:0005524">
    <property type="term" value="F:ATP binding"/>
    <property type="evidence" value="ECO:0007669"/>
    <property type="project" value="UniProtKB-UniRule"/>
</dbReference>
<dbReference type="GO" id="GO:0016887">
    <property type="term" value="F:ATP hydrolysis activity"/>
    <property type="evidence" value="ECO:0007669"/>
    <property type="project" value="InterPro"/>
</dbReference>
<dbReference type="GO" id="GO:0046933">
    <property type="term" value="F:proton-transporting ATP synthase activity, rotational mechanism"/>
    <property type="evidence" value="ECO:0007669"/>
    <property type="project" value="UniProtKB-UniRule"/>
</dbReference>
<dbReference type="CDD" id="cd18110">
    <property type="entry name" value="ATP-synt_F1_beta_C"/>
    <property type="match status" value="1"/>
</dbReference>
<dbReference type="CDD" id="cd18115">
    <property type="entry name" value="ATP-synt_F1_beta_N"/>
    <property type="match status" value="1"/>
</dbReference>
<dbReference type="CDD" id="cd01133">
    <property type="entry name" value="F1-ATPase_beta_CD"/>
    <property type="match status" value="1"/>
</dbReference>
<dbReference type="FunFam" id="1.10.1140.10:FF:000001">
    <property type="entry name" value="ATP synthase subunit beta"/>
    <property type="match status" value="1"/>
</dbReference>
<dbReference type="FunFam" id="3.40.50.300:FF:000004">
    <property type="entry name" value="ATP synthase subunit beta"/>
    <property type="match status" value="1"/>
</dbReference>
<dbReference type="Gene3D" id="2.40.10.170">
    <property type="match status" value="1"/>
</dbReference>
<dbReference type="Gene3D" id="1.10.1140.10">
    <property type="entry name" value="Bovine Mitochondrial F1-atpase, Atp Synthase Beta Chain, Chain D, domain 3"/>
    <property type="match status" value="1"/>
</dbReference>
<dbReference type="Gene3D" id="3.40.50.300">
    <property type="entry name" value="P-loop containing nucleotide triphosphate hydrolases"/>
    <property type="match status" value="1"/>
</dbReference>
<dbReference type="HAMAP" id="MF_01347">
    <property type="entry name" value="ATP_synth_beta_bact"/>
    <property type="match status" value="1"/>
</dbReference>
<dbReference type="InterPro" id="IPR003593">
    <property type="entry name" value="AAA+_ATPase"/>
</dbReference>
<dbReference type="InterPro" id="IPR055190">
    <property type="entry name" value="ATP-synt_VA_C"/>
</dbReference>
<dbReference type="InterPro" id="IPR005722">
    <property type="entry name" value="ATP_synth_F1_bsu"/>
</dbReference>
<dbReference type="InterPro" id="IPR020003">
    <property type="entry name" value="ATPase_a/bsu_AS"/>
</dbReference>
<dbReference type="InterPro" id="IPR050053">
    <property type="entry name" value="ATPase_alpha/beta_chains"/>
</dbReference>
<dbReference type="InterPro" id="IPR004100">
    <property type="entry name" value="ATPase_F1/V1/A1_a/bsu_N"/>
</dbReference>
<dbReference type="InterPro" id="IPR036121">
    <property type="entry name" value="ATPase_F1/V1/A1_a/bsu_N_sf"/>
</dbReference>
<dbReference type="InterPro" id="IPR000194">
    <property type="entry name" value="ATPase_F1/V1/A1_a/bsu_nucl-bd"/>
</dbReference>
<dbReference type="InterPro" id="IPR024034">
    <property type="entry name" value="ATPase_F1/V1_b/a_C"/>
</dbReference>
<dbReference type="InterPro" id="IPR027417">
    <property type="entry name" value="P-loop_NTPase"/>
</dbReference>
<dbReference type="NCBIfam" id="TIGR01039">
    <property type="entry name" value="atpD"/>
    <property type="match status" value="1"/>
</dbReference>
<dbReference type="PANTHER" id="PTHR15184">
    <property type="entry name" value="ATP SYNTHASE"/>
    <property type="match status" value="1"/>
</dbReference>
<dbReference type="PANTHER" id="PTHR15184:SF71">
    <property type="entry name" value="ATP SYNTHASE SUBUNIT BETA, MITOCHONDRIAL"/>
    <property type="match status" value="1"/>
</dbReference>
<dbReference type="Pfam" id="PF00006">
    <property type="entry name" value="ATP-synt_ab"/>
    <property type="match status" value="1"/>
</dbReference>
<dbReference type="Pfam" id="PF02874">
    <property type="entry name" value="ATP-synt_ab_N"/>
    <property type="match status" value="1"/>
</dbReference>
<dbReference type="Pfam" id="PF22919">
    <property type="entry name" value="ATP-synt_VA_C"/>
    <property type="match status" value="1"/>
</dbReference>
<dbReference type="SMART" id="SM00382">
    <property type="entry name" value="AAA"/>
    <property type="match status" value="1"/>
</dbReference>
<dbReference type="SUPFAM" id="SSF47917">
    <property type="entry name" value="C-terminal domain of alpha and beta subunits of F1 ATP synthase"/>
    <property type="match status" value="1"/>
</dbReference>
<dbReference type="SUPFAM" id="SSF50615">
    <property type="entry name" value="N-terminal domain of alpha and beta subunits of F1 ATP synthase"/>
    <property type="match status" value="1"/>
</dbReference>
<dbReference type="SUPFAM" id="SSF52540">
    <property type="entry name" value="P-loop containing nucleoside triphosphate hydrolases"/>
    <property type="match status" value="1"/>
</dbReference>
<dbReference type="PROSITE" id="PS00152">
    <property type="entry name" value="ATPASE_ALPHA_BETA"/>
    <property type="match status" value="1"/>
</dbReference>
<gene>
    <name evidence="1" type="primary">atpD</name>
    <name type="ordered locus">XfasM23_0424</name>
</gene>
<accession>B2I877</accession>
<name>ATPB_XYLF2</name>
<reference key="1">
    <citation type="journal article" date="2010" name="J. Bacteriol.">
        <title>Whole genome sequences of two Xylella fastidiosa strains (M12 and M23) causing almond leaf scorch disease in California.</title>
        <authorList>
            <person name="Chen J."/>
            <person name="Xie G."/>
            <person name="Han S."/>
            <person name="Chertkov O."/>
            <person name="Sims D."/>
            <person name="Civerolo E.L."/>
        </authorList>
    </citation>
    <scope>NUCLEOTIDE SEQUENCE [LARGE SCALE GENOMIC DNA]</scope>
    <source>
        <strain>M23</strain>
    </source>
</reference>
<sequence length="466" mass="50724">MNQGKIVQIIGAIVDVEFPRNNVPKVYNALKIDGTAIILEVQQQLGDGIVRTIALGSTDGLKRNLIATDTGHAITVPVGTGTLGRIMDVLGNPIDEAGPITYTDQWEIHRNAPSYEDQASTTELLETGIKVIDLMCPFAKGGKVGLFGGAGVGKTVNMMELINNIAKAHSGLSVFAGVGERTREGNDFYHEMKDSNVLDKVAMVYGQMNEPPGNRLRVALTGLTMAEYFRDEKDSSGKGKDVLLFIDNIYRYTLAGTEVSALLGRMPSAVGYQPTLAEEMGVLQERITSTANGSITSIQAVYVPADDLTDPSPATTFGHLDSTVTLSRSIAALGIYPAVDPLDSSSRQMDPLIIGEEHYNTTQRVQQTLQKYKDLKDIIAILGMDELSEDDKLSVSRARKIERFFSQPFHVAEVFTGAPGKYVPLKDTIRGFKAIVDGEYDHLPEQAFYMVGNIEEVIEKANKMTA</sequence>
<proteinExistence type="inferred from homology"/>
<protein>
    <recommendedName>
        <fullName evidence="1">ATP synthase subunit beta</fullName>
        <ecNumber evidence="1">7.1.2.2</ecNumber>
    </recommendedName>
    <alternativeName>
        <fullName evidence="1">ATP synthase F1 sector subunit beta</fullName>
    </alternativeName>
    <alternativeName>
        <fullName evidence="1">F-ATPase subunit beta</fullName>
    </alternativeName>
</protein>
<keyword id="KW-0066">ATP synthesis</keyword>
<keyword id="KW-0067">ATP-binding</keyword>
<keyword id="KW-0997">Cell inner membrane</keyword>
<keyword id="KW-1003">Cell membrane</keyword>
<keyword id="KW-0139">CF(1)</keyword>
<keyword id="KW-0375">Hydrogen ion transport</keyword>
<keyword id="KW-0406">Ion transport</keyword>
<keyword id="KW-0472">Membrane</keyword>
<keyword id="KW-0547">Nucleotide-binding</keyword>
<keyword id="KW-1278">Translocase</keyword>
<keyword id="KW-0813">Transport</keyword>